<gene>
    <name evidence="1" type="primary">pheT</name>
    <name type="ordered locus">Pcar_1423</name>
</gene>
<evidence type="ECO:0000255" key="1">
    <source>
        <dbReference type="HAMAP-Rule" id="MF_00283"/>
    </source>
</evidence>
<protein>
    <recommendedName>
        <fullName evidence="1">Phenylalanine--tRNA ligase beta subunit</fullName>
        <ecNumber evidence="1">6.1.1.20</ecNumber>
    </recommendedName>
    <alternativeName>
        <fullName evidence="1">Phenylalanyl-tRNA synthetase beta subunit</fullName>
        <shortName evidence="1">PheRS</shortName>
    </alternativeName>
</protein>
<sequence>MIVTYNWLKEFVDFEMSPDELAHRLTMAGLEVDSMDFIGEGLDSVVTARLVSVDKHPDADKLTVCQVDYGQDTVQVVCGATNHKAGDVVALATVGTVLPGDFKIKKSKIRGMESFGMLCSEKELGLAQDSDGIMILSPDCEPGQPVFEVLGLKDVRYELGLTPNRPDCLSVLGVAREVSAMCGRSLNVNLPPLSEGDESTRALTSVTIEDAEYCPRYAARLIRGVKVGPSPDWLVRKLESVGQRSVNNVVDVTNFILMELGHPLHAFDYQRLAEGRIVVKRAASKEQFTTLDSVSRSLEKSDLVICDGQGAVALAGVMGGENSEVVAETVDILLESAYFNPLAIRRTSKRLSLRSEASHRFERGADIAMVPVALDKAAALIVQVAGGVVCKGMIDEFPRPLAERKVTLAVQRVNEILGLKLGMDDIQAHLLSIGLEVQPVEEKDIDRLVVTIPSFRPDLERDIDLVEEVARLNGYDNIPVTMPAGRMLCHLPPQHLREVKRLRDVMVAAGFNETVNYSFVAPEAWDRLELSDDDPRREPVKILNPLTEDQSVMRTSLVPSLLECVTRNVAYQNSDLHLFELRPVFLTHTDDVLPIEKWRLCAVLCGRREQEGWRQNDEKVDFYDLKGVVEQILDSFNVAKVTWDGSSSENFLHPGKSCTLKQKKTVLGTLGEVHPKVLAAFDIDQPVYLLDLDFEQLLMAAGGHGGFSALSRFPQVARDSAFLVDEDIPFSEISEVLNRSTGKLVEDIVLFDVYRGKGIPEGKKSLAIRVRYRSDDRTLKDEEIQKAHDKIVKALIAKLGAEIR</sequence>
<name>SYFB_SYNC1</name>
<organism>
    <name type="scientific">Syntrophotalea carbinolica (strain DSM 2380 / NBRC 103641 / GraBd1)</name>
    <name type="common">Pelobacter carbinolicus</name>
    <dbReference type="NCBI Taxonomy" id="338963"/>
    <lineage>
        <taxon>Bacteria</taxon>
        <taxon>Pseudomonadati</taxon>
        <taxon>Thermodesulfobacteriota</taxon>
        <taxon>Desulfuromonadia</taxon>
        <taxon>Desulfuromonadales</taxon>
        <taxon>Syntrophotaleaceae</taxon>
        <taxon>Syntrophotalea</taxon>
    </lineage>
</organism>
<proteinExistence type="inferred from homology"/>
<dbReference type="EC" id="6.1.1.20" evidence="1"/>
<dbReference type="EMBL" id="CP000142">
    <property type="protein sequence ID" value="ABA88669.1"/>
    <property type="molecule type" value="Genomic_DNA"/>
</dbReference>
<dbReference type="RefSeq" id="WP_011341152.1">
    <property type="nucleotide sequence ID" value="NC_007498.2"/>
</dbReference>
<dbReference type="SMR" id="Q3A4N8"/>
<dbReference type="STRING" id="338963.Pcar_1423"/>
<dbReference type="KEGG" id="pca:Pcar_1423"/>
<dbReference type="eggNOG" id="COG0072">
    <property type="taxonomic scope" value="Bacteria"/>
</dbReference>
<dbReference type="HOGENOM" id="CLU_016891_0_0_7"/>
<dbReference type="OrthoDB" id="9805455at2"/>
<dbReference type="Proteomes" id="UP000002534">
    <property type="component" value="Chromosome"/>
</dbReference>
<dbReference type="GO" id="GO:0009328">
    <property type="term" value="C:phenylalanine-tRNA ligase complex"/>
    <property type="evidence" value="ECO:0007669"/>
    <property type="project" value="TreeGrafter"/>
</dbReference>
<dbReference type="GO" id="GO:0005524">
    <property type="term" value="F:ATP binding"/>
    <property type="evidence" value="ECO:0007669"/>
    <property type="project" value="UniProtKB-UniRule"/>
</dbReference>
<dbReference type="GO" id="GO:0000287">
    <property type="term" value="F:magnesium ion binding"/>
    <property type="evidence" value="ECO:0007669"/>
    <property type="project" value="UniProtKB-UniRule"/>
</dbReference>
<dbReference type="GO" id="GO:0004826">
    <property type="term" value="F:phenylalanine-tRNA ligase activity"/>
    <property type="evidence" value="ECO:0007669"/>
    <property type="project" value="UniProtKB-UniRule"/>
</dbReference>
<dbReference type="GO" id="GO:0000049">
    <property type="term" value="F:tRNA binding"/>
    <property type="evidence" value="ECO:0007669"/>
    <property type="project" value="UniProtKB-KW"/>
</dbReference>
<dbReference type="GO" id="GO:0006432">
    <property type="term" value="P:phenylalanyl-tRNA aminoacylation"/>
    <property type="evidence" value="ECO:0007669"/>
    <property type="project" value="UniProtKB-UniRule"/>
</dbReference>
<dbReference type="CDD" id="cd00769">
    <property type="entry name" value="PheRS_beta_core"/>
    <property type="match status" value="1"/>
</dbReference>
<dbReference type="CDD" id="cd02796">
    <property type="entry name" value="tRNA_bind_bactPheRS"/>
    <property type="match status" value="1"/>
</dbReference>
<dbReference type="FunFam" id="2.40.50.140:FF:000045">
    <property type="entry name" value="Phenylalanine--tRNA ligase beta subunit"/>
    <property type="match status" value="1"/>
</dbReference>
<dbReference type="FunFam" id="3.30.70.380:FF:000001">
    <property type="entry name" value="Phenylalanine--tRNA ligase beta subunit"/>
    <property type="match status" value="1"/>
</dbReference>
<dbReference type="FunFam" id="3.30.930.10:FF:000022">
    <property type="entry name" value="Phenylalanine--tRNA ligase beta subunit"/>
    <property type="match status" value="1"/>
</dbReference>
<dbReference type="FunFam" id="3.50.40.10:FF:000001">
    <property type="entry name" value="Phenylalanine--tRNA ligase beta subunit"/>
    <property type="match status" value="1"/>
</dbReference>
<dbReference type="Gene3D" id="3.30.56.10">
    <property type="match status" value="2"/>
</dbReference>
<dbReference type="Gene3D" id="3.30.930.10">
    <property type="entry name" value="Bira Bifunctional Protein, Domain 2"/>
    <property type="match status" value="1"/>
</dbReference>
<dbReference type="Gene3D" id="3.30.70.380">
    <property type="entry name" value="Ferrodoxin-fold anticodon-binding domain"/>
    <property type="match status" value="1"/>
</dbReference>
<dbReference type="Gene3D" id="2.40.50.140">
    <property type="entry name" value="Nucleic acid-binding proteins"/>
    <property type="match status" value="1"/>
</dbReference>
<dbReference type="Gene3D" id="3.50.40.10">
    <property type="entry name" value="Phenylalanyl-trna Synthetase, Chain B, domain 3"/>
    <property type="match status" value="1"/>
</dbReference>
<dbReference type="HAMAP" id="MF_00283">
    <property type="entry name" value="Phe_tRNA_synth_beta1"/>
    <property type="match status" value="1"/>
</dbReference>
<dbReference type="InterPro" id="IPR045864">
    <property type="entry name" value="aa-tRNA-synth_II/BPL/LPL"/>
</dbReference>
<dbReference type="InterPro" id="IPR005146">
    <property type="entry name" value="B3/B4_tRNA-bd"/>
</dbReference>
<dbReference type="InterPro" id="IPR009061">
    <property type="entry name" value="DNA-bd_dom_put_sf"/>
</dbReference>
<dbReference type="InterPro" id="IPR005121">
    <property type="entry name" value="Fdx_antiC-bd"/>
</dbReference>
<dbReference type="InterPro" id="IPR036690">
    <property type="entry name" value="Fdx_antiC-bd_sf"/>
</dbReference>
<dbReference type="InterPro" id="IPR012340">
    <property type="entry name" value="NA-bd_OB-fold"/>
</dbReference>
<dbReference type="InterPro" id="IPR045060">
    <property type="entry name" value="Phe-tRNA-ligase_IIc_bsu"/>
</dbReference>
<dbReference type="InterPro" id="IPR004532">
    <property type="entry name" value="Phe-tRNA-ligase_IIc_bsu_bact"/>
</dbReference>
<dbReference type="InterPro" id="IPR020825">
    <property type="entry name" value="Phe-tRNA_synthase-like_B3/B4"/>
</dbReference>
<dbReference type="InterPro" id="IPR041616">
    <property type="entry name" value="PheRS_beta_core"/>
</dbReference>
<dbReference type="InterPro" id="IPR002547">
    <property type="entry name" value="tRNA-bd_dom"/>
</dbReference>
<dbReference type="InterPro" id="IPR033714">
    <property type="entry name" value="tRNA_bind_bactPheRS"/>
</dbReference>
<dbReference type="InterPro" id="IPR005147">
    <property type="entry name" value="tRNA_synthase_B5-dom"/>
</dbReference>
<dbReference type="NCBIfam" id="TIGR00472">
    <property type="entry name" value="pheT_bact"/>
    <property type="match status" value="1"/>
</dbReference>
<dbReference type="NCBIfam" id="NF045760">
    <property type="entry name" value="YtpR"/>
    <property type="match status" value="1"/>
</dbReference>
<dbReference type="PANTHER" id="PTHR10947:SF0">
    <property type="entry name" value="PHENYLALANINE--TRNA LIGASE BETA SUBUNIT"/>
    <property type="match status" value="1"/>
</dbReference>
<dbReference type="PANTHER" id="PTHR10947">
    <property type="entry name" value="PHENYLALANYL-TRNA SYNTHETASE BETA CHAIN AND LEUCINE-RICH REPEAT-CONTAINING PROTEIN 47"/>
    <property type="match status" value="1"/>
</dbReference>
<dbReference type="Pfam" id="PF03483">
    <property type="entry name" value="B3_4"/>
    <property type="match status" value="1"/>
</dbReference>
<dbReference type="Pfam" id="PF03484">
    <property type="entry name" value="B5"/>
    <property type="match status" value="1"/>
</dbReference>
<dbReference type="Pfam" id="PF03147">
    <property type="entry name" value="FDX-ACB"/>
    <property type="match status" value="1"/>
</dbReference>
<dbReference type="Pfam" id="PF01588">
    <property type="entry name" value="tRNA_bind"/>
    <property type="match status" value="1"/>
</dbReference>
<dbReference type="Pfam" id="PF17759">
    <property type="entry name" value="tRNA_synthFbeta"/>
    <property type="match status" value="1"/>
</dbReference>
<dbReference type="SMART" id="SM00873">
    <property type="entry name" value="B3_4"/>
    <property type="match status" value="1"/>
</dbReference>
<dbReference type="SMART" id="SM00874">
    <property type="entry name" value="B5"/>
    <property type="match status" value="1"/>
</dbReference>
<dbReference type="SMART" id="SM00896">
    <property type="entry name" value="FDX-ACB"/>
    <property type="match status" value="1"/>
</dbReference>
<dbReference type="SUPFAM" id="SSF54991">
    <property type="entry name" value="Anticodon-binding domain of PheRS"/>
    <property type="match status" value="1"/>
</dbReference>
<dbReference type="SUPFAM" id="SSF55681">
    <property type="entry name" value="Class II aaRS and biotin synthetases"/>
    <property type="match status" value="1"/>
</dbReference>
<dbReference type="SUPFAM" id="SSF50249">
    <property type="entry name" value="Nucleic acid-binding proteins"/>
    <property type="match status" value="1"/>
</dbReference>
<dbReference type="SUPFAM" id="SSF56037">
    <property type="entry name" value="PheT/TilS domain"/>
    <property type="match status" value="1"/>
</dbReference>
<dbReference type="SUPFAM" id="SSF46955">
    <property type="entry name" value="Putative DNA-binding domain"/>
    <property type="match status" value="1"/>
</dbReference>
<dbReference type="PROSITE" id="PS51483">
    <property type="entry name" value="B5"/>
    <property type="match status" value="1"/>
</dbReference>
<dbReference type="PROSITE" id="PS51447">
    <property type="entry name" value="FDX_ACB"/>
    <property type="match status" value="1"/>
</dbReference>
<dbReference type="PROSITE" id="PS50886">
    <property type="entry name" value="TRBD"/>
    <property type="match status" value="1"/>
</dbReference>
<accession>Q3A4N8</accession>
<reference key="1">
    <citation type="submission" date="2005-10" db="EMBL/GenBank/DDBJ databases">
        <title>Complete sequence of Pelobacter carbinolicus DSM 2380.</title>
        <authorList>
            <person name="Copeland A."/>
            <person name="Lucas S."/>
            <person name="Lapidus A."/>
            <person name="Barry K."/>
            <person name="Detter J.C."/>
            <person name="Glavina T."/>
            <person name="Hammon N."/>
            <person name="Israni S."/>
            <person name="Pitluck S."/>
            <person name="Chertkov O."/>
            <person name="Schmutz J."/>
            <person name="Larimer F."/>
            <person name="Land M."/>
            <person name="Kyrpides N."/>
            <person name="Ivanova N."/>
            <person name="Richardson P."/>
        </authorList>
    </citation>
    <scope>NUCLEOTIDE SEQUENCE [LARGE SCALE GENOMIC DNA]</scope>
    <source>
        <strain>DSM 2380 / NBRC 103641 / GraBd1</strain>
    </source>
</reference>
<feature type="chain" id="PRO_0000232072" description="Phenylalanine--tRNA ligase beta subunit">
    <location>
        <begin position="1"/>
        <end position="804"/>
    </location>
</feature>
<feature type="domain" description="tRNA-binding" evidence="1">
    <location>
        <begin position="39"/>
        <end position="147"/>
    </location>
</feature>
<feature type="domain" description="B5" evidence="1">
    <location>
        <begin position="401"/>
        <end position="480"/>
    </location>
</feature>
<feature type="domain" description="FDX-ACB" evidence="1">
    <location>
        <begin position="711"/>
        <end position="804"/>
    </location>
</feature>
<feature type="binding site" evidence="1">
    <location>
        <position position="458"/>
    </location>
    <ligand>
        <name>Mg(2+)</name>
        <dbReference type="ChEBI" id="CHEBI:18420"/>
        <note>shared with alpha subunit</note>
    </ligand>
</feature>
<feature type="binding site" evidence="1">
    <location>
        <position position="464"/>
    </location>
    <ligand>
        <name>Mg(2+)</name>
        <dbReference type="ChEBI" id="CHEBI:18420"/>
        <note>shared with alpha subunit</note>
    </ligand>
</feature>
<feature type="binding site" evidence="1">
    <location>
        <position position="467"/>
    </location>
    <ligand>
        <name>Mg(2+)</name>
        <dbReference type="ChEBI" id="CHEBI:18420"/>
        <note>shared with alpha subunit</note>
    </ligand>
</feature>
<feature type="binding site" evidence="1">
    <location>
        <position position="468"/>
    </location>
    <ligand>
        <name>Mg(2+)</name>
        <dbReference type="ChEBI" id="CHEBI:18420"/>
        <note>shared with alpha subunit</note>
    </ligand>
</feature>
<comment type="catalytic activity">
    <reaction evidence="1">
        <text>tRNA(Phe) + L-phenylalanine + ATP = L-phenylalanyl-tRNA(Phe) + AMP + diphosphate + H(+)</text>
        <dbReference type="Rhea" id="RHEA:19413"/>
        <dbReference type="Rhea" id="RHEA-COMP:9668"/>
        <dbReference type="Rhea" id="RHEA-COMP:9699"/>
        <dbReference type="ChEBI" id="CHEBI:15378"/>
        <dbReference type="ChEBI" id="CHEBI:30616"/>
        <dbReference type="ChEBI" id="CHEBI:33019"/>
        <dbReference type="ChEBI" id="CHEBI:58095"/>
        <dbReference type="ChEBI" id="CHEBI:78442"/>
        <dbReference type="ChEBI" id="CHEBI:78531"/>
        <dbReference type="ChEBI" id="CHEBI:456215"/>
        <dbReference type="EC" id="6.1.1.20"/>
    </reaction>
</comment>
<comment type="cofactor">
    <cofactor evidence="1">
        <name>Mg(2+)</name>
        <dbReference type="ChEBI" id="CHEBI:18420"/>
    </cofactor>
    <text evidence="1">Binds 2 magnesium ions per tetramer.</text>
</comment>
<comment type="subunit">
    <text evidence="1">Tetramer of two alpha and two beta subunits.</text>
</comment>
<comment type="subcellular location">
    <subcellularLocation>
        <location evidence="1">Cytoplasm</location>
    </subcellularLocation>
</comment>
<comment type="similarity">
    <text evidence="1">Belongs to the phenylalanyl-tRNA synthetase beta subunit family. Type 1 subfamily.</text>
</comment>
<keyword id="KW-0030">Aminoacyl-tRNA synthetase</keyword>
<keyword id="KW-0067">ATP-binding</keyword>
<keyword id="KW-0963">Cytoplasm</keyword>
<keyword id="KW-0436">Ligase</keyword>
<keyword id="KW-0460">Magnesium</keyword>
<keyword id="KW-0479">Metal-binding</keyword>
<keyword id="KW-0547">Nucleotide-binding</keyword>
<keyword id="KW-0648">Protein biosynthesis</keyword>
<keyword id="KW-1185">Reference proteome</keyword>
<keyword id="KW-0694">RNA-binding</keyword>
<keyword id="KW-0820">tRNA-binding</keyword>